<sequence>MSLNPDLAAYLQLVEAGRSAGKVLPMHALEADEARRQFEESSALIAGKADEPDCISDLSLTTRDGHTLPVRLYRPPQDDPALAGAALLYLHGGGYVVGSLDSHDTLCWNLAQDAGVPVIAVGYRLAPQWRFPTASDDALDAWRWLVEQAEALGIDAQRLAVVGDSVGGSLATILANQLAAQRELAAPRLQVMIYPVTDASCRRPSVQRYGSGYLLEAQTLEWFYQQYATVPADRLDPRFSPLLGSVASNSAPALMLIAECDPLHDQGVAYARHLEQAGVAVQLAVIPGVTHDFMRMGSIIEEADEGLVMVVEALQQHL</sequence>
<organism>
    <name type="scientific">Pseudomonas putida</name>
    <name type="common">Arthrobacter siderocapsulatus</name>
    <dbReference type="NCBI Taxonomy" id="303"/>
    <lineage>
        <taxon>Bacteria</taxon>
        <taxon>Pseudomonadati</taxon>
        <taxon>Pseudomonadota</taxon>
        <taxon>Gammaproteobacteria</taxon>
        <taxon>Pseudomonadales</taxon>
        <taxon>Pseudomonadaceae</taxon>
        <taxon>Pseudomonas</taxon>
    </lineage>
</organism>
<keyword id="KW-0963">Cytoplasm</keyword>
<keyword id="KW-0378">Hydrolase</keyword>
<gene>
    <name evidence="3" type="primary">estZ</name>
</gene>
<feature type="chain" id="PRO_0000457711" description="Ethyl acetate hydrolase">
    <location>
        <begin position="1"/>
        <end position="318"/>
    </location>
</feature>
<feature type="active site" evidence="1">
    <location>
        <position position="165"/>
    </location>
</feature>
<feature type="active site" evidence="1">
    <location>
        <position position="261"/>
    </location>
</feature>
<feature type="active site" evidence="1">
    <location>
        <position position="291"/>
    </location>
</feature>
<evidence type="ECO:0000250" key="1">
    <source>
        <dbReference type="UniProtKB" id="P95125"/>
    </source>
</evidence>
<evidence type="ECO:0000269" key="2">
    <source>
    </source>
</evidence>
<evidence type="ECO:0000303" key="3">
    <source>
    </source>
</evidence>
<evidence type="ECO:0000305" key="4"/>
<evidence type="ECO:0000305" key="5">
    <source>
    </source>
</evidence>
<accession>Q8KQK1</accession>
<dbReference type="EC" id="3.1.1.113" evidence="2"/>
<dbReference type="EMBL" id="AY082397">
    <property type="protein sequence ID" value="AAM16269.1"/>
    <property type="molecule type" value="Genomic_DNA"/>
</dbReference>
<dbReference type="SMR" id="Q8KQK1"/>
<dbReference type="ESTHER" id="psepu-Q8KQK1">
    <property type="family name" value="Hormone-sensitive_lipase_like"/>
</dbReference>
<dbReference type="BRENDA" id="3.1.1.113">
    <property type="organism ID" value="5092"/>
</dbReference>
<dbReference type="GO" id="GO:0005737">
    <property type="term" value="C:cytoplasm"/>
    <property type="evidence" value="ECO:0007669"/>
    <property type="project" value="UniProtKB-SubCell"/>
</dbReference>
<dbReference type="GO" id="GO:0016787">
    <property type="term" value="F:hydrolase activity"/>
    <property type="evidence" value="ECO:0007669"/>
    <property type="project" value="UniProtKB-KW"/>
</dbReference>
<dbReference type="Gene3D" id="3.40.50.1820">
    <property type="entry name" value="alpha/beta hydrolase"/>
    <property type="match status" value="1"/>
</dbReference>
<dbReference type="InterPro" id="IPR013094">
    <property type="entry name" value="AB_hydrolase_3"/>
</dbReference>
<dbReference type="InterPro" id="IPR029058">
    <property type="entry name" value="AB_hydrolase_fold"/>
</dbReference>
<dbReference type="InterPro" id="IPR050300">
    <property type="entry name" value="GDXG_lipolytic_enzyme"/>
</dbReference>
<dbReference type="InterPro" id="IPR002168">
    <property type="entry name" value="Lipase_GDXG_HIS_AS"/>
</dbReference>
<dbReference type="PANTHER" id="PTHR48081">
    <property type="entry name" value="AB HYDROLASE SUPERFAMILY PROTEIN C4A8.06C"/>
    <property type="match status" value="1"/>
</dbReference>
<dbReference type="PANTHER" id="PTHR48081:SF8">
    <property type="entry name" value="ALPHA_BETA HYDROLASE FOLD-3 DOMAIN-CONTAINING PROTEIN-RELATED"/>
    <property type="match status" value="1"/>
</dbReference>
<dbReference type="Pfam" id="PF07859">
    <property type="entry name" value="Abhydrolase_3"/>
    <property type="match status" value="1"/>
</dbReference>
<dbReference type="SUPFAM" id="SSF53474">
    <property type="entry name" value="alpha/beta-Hydrolases"/>
    <property type="match status" value="1"/>
</dbReference>
<dbReference type="PROSITE" id="PS01173">
    <property type="entry name" value="LIPASE_GDXG_HIS"/>
    <property type="match status" value="1"/>
</dbReference>
<protein>
    <recommendedName>
        <fullName evidence="3">Ethyl acetate hydrolase</fullName>
        <ecNumber evidence="2">3.1.1.113</ecNumber>
    </recommendedName>
    <alternativeName>
        <fullName evidence="3">Ethyl acetate esterase</fullName>
    </alternativeName>
    <alternativeName>
        <fullName evidence="3">Short-chain aliphatic ester esterase</fullName>
    </alternativeName>
</protein>
<name>ESTZ_PSEPU</name>
<proteinExistence type="evidence at protein level"/>
<reference key="1">
    <citation type="journal article" date="2002" name="Appl. Environ. Microbiol.">
        <title>Decreasing the level of ethyl acetate in ethanolic fermentation broths of Escherichia coli KO11 by expression of Pseudomonas putida estZ esterase.</title>
        <authorList>
            <person name="Hasona A."/>
            <person name="York S.W."/>
            <person name="Yomano L.P."/>
            <person name="Ingram L.O."/>
            <person name="Shanmugam K.T."/>
        </authorList>
    </citation>
    <scope>NUCLEOTIDE SEQUENCE [GENOMIC DNA]</scope>
    <scope>FUNCTION</scope>
    <scope>CATALYTIC ACTIVITY</scope>
    <scope>ACTIVITY REGULATION</scope>
    <scope>BIOPHYSICOCHEMICAL PROPERTIES</scope>
    <scope>SUBUNIT</scope>
    <scope>SUBCELLULAR LOCATION</scope>
    <scope>BIOTECHNOLOGY</scope>
    <source>
        <strain>NRRL B-18435</strain>
    </source>
</reference>
<comment type="function">
    <text evidence="2 5">Esterase that catalyzes the hydrolysis of ethyl acetate (PubMed:12039716). Can also use propyl acetate and the chromogenic substrates alpha-naphthyl acetate, alpha-naphthyl propionate, alpha-naphthyl caproate and 4-nitrophenyl acetate, with a preference for short-chain aliphatic esters (PubMed:12039716). Highest activity is obtained in vitro with propyl acetate, followed by ethyl acetate (PubMed:12039716). In vivo, could be involved in pyoverdine biosynthesis, but its specific role and its in vivo substrate have not been identified (Probable).</text>
</comment>
<comment type="catalytic activity">
    <reaction evidence="2">
        <text>ethyl acetate + H2O = ethanol + acetate + H(+)</text>
        <dbReference type="Rhea" id="RHEA:58148"/>
        <dbReference type="ChEBI" id="CHEBI:15377"/>
        <dbReference type="ChEBI" id="CHEBI:15378"/>
        <dbReference type="ChEBI" id="CHEBI:16236"/>
        <dbReference type="ChEBI" id="CHEBI:27750"/>
        <dbReference type="ChEBI" id="CHEBI:30089"/>
        <dbReference type="EC" id="3.1.1.113"/>
    </reaction>
</comment>
<comment type="activity regulation">
    <text evidence="2">Inhibited by the serine protease inhibitor phenylmethylsulfonyl fluoride, the histidine reagent diethylpyrocarbonate and two sulfhydryl reagents, mercuric chloride and naphthol AS-D chloroacetate (PubMed:12039716). Not inhibited by EDTA (PubMed:12039716).</text>
</comment>
<comment type="biophysicochemical properties">
    <kinetics>
        <KM evidence="2">18 uM for alpha-naphthyl acetate</KM>
        <KM evidence="2">54 uM for 4-nitrophenyl acetate</KM>
        <Vmax evidence="2">48.0 umol/min/mg enzyme with alpha-naphthyl acetate as substrate</Vmax>
        <Vmax evidence="2">106.0 umol/min/mg enzyme with 4-nitrophenyl acetate as substrate</Vmax>
        <text evidence="2">kcat is 29 sec(-1) with alpha-naphthyl acetate as substrate. kcat is 64 sec(-1) with 4-nitrophenyl acetate as substrate.</text>
    </kinetics>
    <phDependence>
        <text evidence="2">Optimum pH is 7.5 with alpha-naphthyl acetate as substrate.</text>
    </phDependence>
    <temperatureDependence>
        <text evidence="2">Optimum temperature is between 35 and 45 degrees Celsius, with maximal activity near 40 degrees Celsius with alpha-naphthyl acetate as substrate.</text>
    </temperatureDependence>
</comment>
<comment type="subunit">
    <text evidence="2">Monomer.</text>
</comment>
<comment type="subcellular location">
    <subcellularLocation>
        <location evidence="2">Cytoplasm</location>
    </subcellularLocation>
</comment>
<comment type="biotechnology">
    <text evidence="2">Ethyl acetate is an undesirable coproduct produced in ethanolic fermentation broths during the fermentation of sugars to ethanol. EstZ could be used to effectively reduce the level of ethyl acetate in ethanol beers produced with the ethanologenic E.coli strain KO11.</text>
</comment>
<comment type="similarity">
    <text evidence="4">Belongs to the 'GDXG' lipolytic enzyme family.</text>
</comment>